<dbReference type="EMBL" id="AC004683">
    <property type="protein sequence ID" value="AAC28772.2"/>
    <property type="molecule type" value="Genomic_DNA"/>
</dbReference>
<dbReference type="EMBL" id="CP002685">
    <property type="protein sequence ID" value="AEC09523.1"/>
    <property type="molecule type" value="Genomic_DNA"/>
</dbReference>
<dbReference type="EMBL" id="AF370310">
    <property type="protein sequence ID" value="AAK44125.1"/>
    <property type="molecule type" value="mRNA"/>
</dbReference>
<dbReference type="PIR" id="T02513">
    <property type="entry name" value="T02513"/>
</dbReference>
<dbReference type="RefSeq" id="NP_565888.1">
    <property type="nucleotide sequence ID" value="NM_129388.3"/>
</dbReference>
<dbReference type="SMR" id="O80919"/>
<dbReference type="FunCoup" id="O80919">
    <property type="interactions" value="59"/>
</dbReference>
<dbReference type="STRING" id="3702.O80919"/>
<dbReference type="PaxDb" id="3702-AT2G38320.1"/>
<dbReference type="ProteomicsDB" id="232992"/>
<dbReference type="EnsemblPlants" id="AT2G38320.1">
    <property type="protein sequence ID" value="AT2G38320.1"/>
    <property type="gene ID" value="AT2G38320"/>
</dbReference>
<dbReference type="GeneID" id="818412"/>
<dbReference type="Gramene" id="AT2G38320.1">
    <property type="protein sequence ID" value="AT2G38320.1"/>
    <property type="gene ID" value="AT2G38320"/>
</dbReference>
<dbReference type="KEGG" id="ath:AT2G38320"/>
<dbReference type="Araport" id="AT2G38320"/>
<dbReference type="TAIR" id="AT2G38320">
    <property type="gene designation" value="TBL34"/>
</dbReference>
<dbReference type="eggNOG" id="ENOG502QTH8">
    <property type="taxonomic scope" value="Eukaryota"/>
</dbReference>
<dbReference type="HOGENOM" id="CLU_020953_3_1_1"/>
<dbReference type="InParanoid" id="O80919"/>
<dbReference type="OMA" id="TEATPKM"/>
<dbReference type="PhylomeDB" id="O80919"/>
<dbReference type="PRO" id="PR:O80919"/>
<dbReference type="Proteomes" id="UP000006548">
    <property type="component" value="Chromosome 2"/>
</dbReference>
<dbReference type="ExpressionAtlas" id="O80919">
    <property type="expression patterns" value="baseline and differential"/>
</dbReference>
<dbReference type="GO" id="GO:0005794">
    <property type="term" value="C:Golgi apparatus"/>
    <property type="evidence" value="ECO:0000314"/>
    <property type="project" value="TAIR"/>
</dbReference>
<dbReference type="GO" id="GO:0000139">
    <property type="term" value="C:Golgi membrane"/>
    <property type="evidence" value="ECO:0007669"/>
    <property type="project" value="UniProtKB-SubCell"/>
</dbReference>
<dbReference type="GO" id="GO:1990538">
    <property type="term" value="F:xylan O-acetyltransferase activity"/>
    <property type="evidence" value="ECO:0000315"/>
    <property type="project" value="TAIR"/>
</dbReference>
<dbReference type="GO" id="GO:0045492">
    <property type="term" value="P:xylan biosynthetic process"/>
    <property type="evidence" value="ECO:0000315"/>
    <property type="project" value="TAIR"/>
</dbReference>
<dbReference type="InterPro" id="IPR029962">
    <property type="entry name" value="TBL"/>
</dbReference>
<dbReference type="InterPro" id="IPR026057">
    <property type="entry name" value="TBL_C"/>
</dbReference>
<dbReference type="InterPro" id="IPR025846">
    <property type="entry name" value="TBL_N"/>
</dbReference>
<dbReference type="PANTHER" id="PTHR32285:SF11">
    <property type="entry name" value="PROTEIN TRICHOME BIREFRINGENCE-LIKE 34"/>
    <property type="match status" value="1"/>
</dbReference>
<dbReference type="PANTHER" id="PTHR32285">
    <property type="entry name" value="PROTEIN TRICHOME BIREFRINGENCE-LIKE 9-RELATED"/>
    <property type="match status" value="1"/>
</dbReference>
<dbReference type="Pfam" id="PF13839">
    <property type="entry name" value="PC-Esterase"/>
    <property type="match status" value="1"/>
</dbReference>
<dbReference type="Pfam" id="PF14416">
    <property type="entry name" value="PMR5N"/>
    <property type="match status" value="1"/>
</dbReference>
<sequence>MAKRQLLMLGIRTSFHTIAAVLVAGLIFTAVFLSRNSLPKENPQSHGVTDRGGDSGRECNLFEGKWVFDNVSYPLYKEEDCKFMSDQLACEKFGRKDLSYKFWRWQPHTCDLPRFNGTKLLERLRNKRMVYVGDSLNRGQWVSMVCMVSSVITNPKAMYMHNNGSNLITFKALEYNATIDYYWAPLLVESNSDDPTNHRFPDRIVRIQSIEKHARHWTNSDIIVFNSYLWWRMPHIKSLWGSFEKLDGIYKEVEMVRVYEMALQTLSQWLEVHVNPNITKLFFMSMSPTHERAEEWGGILNQNCYGEASLIDKEGYTGRGSDPKMMRVLENVLDGLKNRGLNMQMINITQLSEYRKEGHPSIYRKQWGTVKENEISNPSSNADCIHWCLPGVPDVWNELLYAYILDHHSS</sequence>
<keyword id="KW-0333">Golgi apparatus</keyword>
<keyword id="KW-0472">Membrane</keyword>
<keyword id="KW-1185">Reference proteome</keyword>
<keyword id="KW-0735">Signal-anchor</keyword>
<keyword id="KW-0812">Transmembrane</keyword>
<keyword id="KW-1133">Transmembrane helix</keyword>
<protein>
    <recommendedName>
        <fullName>Protein trichome birefringence-like 34</fullName>
    </recommendedName>
</protein>
<reference key="1">
    <citation type="journal article" date="1999" name="Nature">
        <title>Sequence and analysis of chromosome 2 of the plant Arabidopsis thaliana.</title>
        <authorList>
            <person name="Lin X."/>
            <person name="Kaul S."/>
            <person name="Rounsley S.D."/>
            <person name="Shea T.P."/>
            <person name="Benito M.-I."/>
            <person name="Town C.D."/>
            <person name="Fujii C.Y."/>
            <person name="Mason T.M."/>
            <person name="Bowman C.L."/>
            <person name="Barnstead M.E."/>
            <person name="Feldblyum T.V."/>
            <person name="Buell C.R."/>
            <person name="Ketchum K.A."/>
            <person name="Lee J.J."/>
            <person name="Ronning C.M."/>
            <person name="Koo H.L."/>
            <person name="Moffat K.S."/>
            <person name="Cronin L.A."/>
            <person name="Shen M."/>
            <person name="Pai G."/>
            <person name="Van Aken S."/>
            <person name="Umayam L."/>
            <person name="Tallon L.J."/>
            <person name="Gill J.E."/>
            <person name="Adams M.D."/>
            <person name="Carrera A.J."/>
            <person name="Creasy T.H."/>
            <person name="Goodman H.M."/>
            <person name="Somerville C.R."/>
            <person name="Copenhaver G.P."/>
            <person name="Preuss D."/>
            <person name="Nierman W.C."/>
            <person name="White O."/>
            <person name="Eisen J.A."/>
            <person name="Salzberg S.L."/>
            <person name="Fraser C.M."/>
            <person name="Venter J.C."/>
        </authorList>
    </citation>
    <scope>NUCLEOTIDE SEQUENCE [LARGE SCALE GENOMIC DNA]</scope>
    <source>
        <strain>cv. Columbia</strain>
    </source>
</reference>
<reference key="2">
    <citation type="journal article" date="2017" name="Plant J.">
        <title>Araport11: a complete reannotation of the Arabidopsis thaliana reference genome.</title>
        <authorList>
            <person name="Cheng C.Y."/>
            <person name="Krishnakumar V."/>
            <person name="Chan A.P."/>
            <person name="Thibaud-Nissen F."/>
            <person name="Schobel S."/>
            <person name="Town C.D."/>
        </authorList>
    </citation>
    <scope>GENOME REANNOTATION</scope>
    <source>
        <strain>cv. Columbia</strain>
    </source>
</reference>
<reference key="3">
    <citation type="journal article" date="2003" name="Science">
        <title>Empirical analysis of transcriptional activity in the Arabidopsis genome.</title>
        <authorList>
            <person name="Yamada K."/>
            <person name="Lim J."/>
            <person name="Dale J.M."/>
            <person name="Chen H."/>
            <person name="Shinn P."/>
            <person name="Palm C.J."/>
            <person name="Southwick A.M."/>
            <person name="Wu H.C."/>
            <person name="Kim C.J."/>
            <person name="Nguyen M."/>
            <person name="Pham P.K."/>
            <person name="Cheuk R.F."/>
            <person name="Karlin-Newmann G."/>
            <person name="Liu S.X."/>
            <person name="Lam B."/>
            <person name="Sakano H."/>
            <person name="Wu T."/>
            <person name="Yu G."/>
            <person name="Miranda M."/>
            <person name="Quach H.L."/>
            <person name="Tripp M."/>
            <person name="Chang C.H."/>
            <person name="Lee J.M."/>
            <person name="Toriumi M.J."/>
            <person name="Chan M.M."/>
            <person name="Tang C.C."/>
            <person name="Onodera C.S."/>
            <person name="Deng J.M."/>
            <person name="Akiyama K."/>
            <person name="Ansari Y."/>
            <person name="Arakawa T."/>
            <person name="Banh J."/>
            <person name="Banno F."/>
            <person name="Bowser L."/>
            <person name="Brooks S.Y."/>
            <person name="Carninci P."/>
            <person name="Chao Q."/>
            <person name="Choy N."/>
            <person name="Enju A."/>
            <person name="Goldsmith A.D."/>
            <person name="Gurjal M."/>
            <person name="Hansen N.F."/>
            <person name="Hayashizaki Y."/>
            <person name="Johnson-Hopson C."/>
            <person name="Hsuan V.W."/>
            <person name="Iida K."/>
            <person name="Karnes M."/>
            <person name="Khan S."/>
            <person name="Koesema E."/>
            <person name="Ishida J."/>
            <person name="Jiang P.X."/>
            <person name="Jones T."/>
            <person name="Kawai J."/>
            <person name="Kamiya A."/>
            <person name="Meyers C."/>
            <person name="Nakajima M."/>
            <person name="Narusaka M."/>
            <person name="Seki M."/>
            <person name="Sakurai T."/>
            <person name="Satou M."/>
            <person name="Tamse R."/>
            <person name="Vaysberg M."/>
            <person name="Wallender E.K."/>
            <person name="Wong C."/>
            <person name="Yamamura Y."/>
            <person name="Yuan S."/>
            <person name="Shinozaki K."/>
            <person name="Davis R.W."/>
            <person name="Theologis A."/>
            <person name="Ecker J.R."/>
        </authorList>
    </citation>
    <scope>NUCLEOTIDE SEQUENCE [LARGE SCALE MRNA]</scope>
    <source>
        <strain>cv. Columbia</strain>
    </source>
</reference>
<reference key="4">
    <citation type="journal article" date="2007" name="Plant J.">
        <title>Arabidopsis ESK1 encodes a novel regulator of freezing tolerance.</title>
        <authorList>
            <person name="Xin Z."/>
            <person name="Mandaokar A."/>
            <person name="Chen J."/>
            <person name="Last R.L."/>
            <person name="Browse J."/>
        </authorList>
    </citation>
    <scope>GENE FAMILY</scope>
    <source>
        <strain>cv. Columbia</strain>
    </source>
</reference>
<reference key="5">
    <citation type="journal article" date="2010" name="Plant Physiol.">
        <title>TRICHOME BIREFRINGENCE and its homolog AT5G01360 encode plant-specific DUF231 proteins required for cellulose biosynthesis in Arabidopsis.</title>
        <authorList>
            <person name="Bischoff V."/>
            <person name="Nita S."/>
            <person name="Neumetzler L."/>
            <person name="Schindelasch D."/>
            <person name="Urbain A."/>
            <person name="Eshed R."/>
            <person name="Persson S."/>
            <person name="Delmer D."/>
            <person name="Scheible W.R."/>
        </authorList>
    </citation>
    <scope>GENE FAMILY</scope>
    <scope>NOMENCLATURE</scope>
</reference>
<reference key="6">
    <citation type="journal article" date="2010" name="PLoS ONE">
        <title>An integrative approach to the identification of Arabidopsis and rice genes involved in xylan and secondary wall development.</title>
        <authorList>
            <person name="Oikawa A."/>
            <person name="Joshi H.J."/>
            <person name="Rennie E.A."/>
            <person name="Ebert B."/>
            <person name="Manisseri C."/>
            <person name="Heazlewood J.L."/>
            <person name="Scheller H.V."/>
        </authorList>
    </citation>
    <scope>SUBCELLULAR LOCATION</scope>
</reference>
<reference key="7">
    <citation type="journal article" date="2010" name="Plant Signal. Behav.">
        <title>Involvement of TBL/DUF231 proteins into cell wall biology.</title>
        <authorList>
            <person name="Bischoff V."/>
            <person name="Selbig J."/>
            <person name="Scheible W.R."/>
        </authorList>
    </citation>
    <scope>3D-STRUCTURE MODELING</scope>
</reference>
<gene>
    <name type="primary">TBL34</name>
    <name type="ordered locus">At2g38320</name>
    <name type="ORF">T19C21.19</name>
</gene>
<evidence type="ECO:0000250" key="1">
    <source>
        <dbReference type="UniProtKB" id="Q9FG35"/>
    </source>
</evidence>
<evidence type="ECO:0000250" key="2">
    <source>
        <dbReference type="UniProtKB" id="Q9LY46"/>
    </source>
</evidence>
<evidence type="ECO:0000255" key="3"/>
<evidence type="ECO:0000269" key="4">
    <source>
    </source>
</evidence>
<evidence type="ECO:0000305" key="5"/>
<evidence type="ECO:0000305" key="6">
    <source>
    </source>
</evidence>
<feature type="chain" id="PRO_0000425399" description="Protein trichome birefringence-like 34">
    <location>
        <begin position="1"/>
        <end position="410"/>
    </location>
</feature>
<feature type="transmembrane region" description="Helical; Signal-anchor for type II membrane protein" evidence="3">
    <location>
        <begin position="13"/>
        <end position="33"/>
    </location>
</feature>
<feature type="short sequence motif" description="GDS motif">
    <location>
        <begin position="133"/>
        <end position="135"/>
    </location>
</feature>
<feature type="short sequence motif" description="DCXHWCLPGXXDXWN motif">
    <location>
        <begin position="383"/>
        <end position="397"/>
    </location>
</feature>
<proteinExistence type="evidence at transcript level"/>
<comment type="function">
    <text evidence="1 2">May act as a bridging protein that binds pectin and other cell wall polysaccharides. Probably involved in maintaining esterification of pectins (By similarity). May be involved in the specific O-acetylation of cell wall polymers (By similarity).</text>
</comment>
<comment type="subcellular location">
    <subcellularLocation>
        <location evidence="4">Golgi apparatus membrane</location>
        <topology evidence="4">Single-pass type II membrane protein</topology>
    </subcellularLocation>
</comment>
<comment type="miscellaneous">
    <text evidence="6">Contains 2 motifs that are conserved in esterases, but it is unlikely that this protein belongs to the catalytically active pectin esterases.</text>
</comment>
<comment type="similarity">
    <text evidence="5">Belongs to the PC-esterase family. TBL subfamily.</text>
</comment>
<organism>
    <name type="scientific">Arabidopsis thaliana</name>
    <name type="common">Mouse-ear cress</name>
    <dbReference type="NCBI Taxonomy" id="3702"/>
    <lineage>
        <taxon>Eukaryota</taxon>
        <taxon>Viridiplantae</taxon>
        <taxon>Streptophyta</taxon>
        <taxon>Embryophyta</taxon>
        <taxon>Tracheophyta</taxon>
        <taxon>Spermatophyta</taxon>
        <taxon>Magnoliopsida</taxon>
        <taxon>eudicotyledons</taxon>
        <taxon>Gunneridae</taxon>
        <taxon>Pentapetalae</taxon>
        <taxon>rosids</taxon>
        <taxon>malvids</taxon>
        <taxon>Brassicales</taxon>
        <taxon>Brassicaceae</taxon>
        <taxon>Camelineae</taxon>
        <taxon>Arabidopsis</taxon>
    </lineage>
</organism>
<accession>O80919</accession>
<accession>Q94K45</accession>
<name>TBL34_ARATH</name>